<gene>
    <name evidence="1" type="primary">matK</name>
</gene>
<organism>
    <name type="scientific">Sapindus saponaria</name>
    <name type="common">Soapberry</name>
    <dbReference type="NCBI Taxonomy" id="171222"/>
    <lineage>
        <taxon>Eukaryota</taxon>
        <taxon>Viridiplantae</taxon>
        <taxon>Streptophyta</taxon>
        <taxon>Embryophyta</taxon>
        <taxon>Tracheophyta</taxon>
        <taxon>Spermatophyta</taxon>
        <taxon>Magnoliopsida</taxon>
        <taxon>eudicotyledons</taxon>
        <taxon>Gunneridae</taxon>
        <taxon>Pentapetalae</taxon>
        <taxon>rosids</taxon>
        <taxon>malvids</taxon>
        <taxon>Sapindales</taxon>
        <taxon>Sapindaceae</taxon>
        <taxon>Sapindus</taxon>
    </lineage>
</organism>
<proteinExistence type="inferred from homology"/>
<protein>
    <recommendedName>
        <fullName evidence="1">Maturase K</fullName>
    </recommendedName>
    <alternativeName>
        <fullName evidence="1">Intron maturase</fullName>
    </alternativeName>
</protein>
<reference key="1">
    <citation type="journal article" date="2005" name="Syst. Bot.">
        <title>Phylogenetic inference in Sapindaceae using plastid matK and rbcL sequences.</title>
        <authorList>
            <person name="Harrington M.G."/>
            <person name="Edwards K.J."/>
            <person name="Johnson S.A."/>
            <person name="Chase M.W."/>
            <person name="Gadek P.A."/>
        </authorList>
        <dbReference type="AGRICOLA" id="IND43726779"/>
    </citation>
    <scope>NUCLEOTIDE SEQUENCE [GENOMIC DNA]</scope>
</reference>
<accession>Q646M7</accession>
<feature type="chain" id="PRO_0000143697" description="Maturase K">
    <location>
        <begin position="1"/>
        <end position="522"/>
    </location>
</feature>
<keyword id="KW-0150">Chloroplast</keyword>
<keyword id="KW-0507">mRNA processing</keyword>
<keyword id="KW-0934">Plastid</keyword>
<keyword id="KW-0694">RNA-binding</keyword>
<keyword id="KW-0819">tRNA processing</keyword>
<geneLocation type="chloroplast"/>
<name>MATK_SAPSA</name>
<evidence type="ECO:0000255" key="1">
    <source>
        <dbReference type="HAMAP-Rule" id="MF_01390"/>
    </source>
</evidence>
<sequence length="522" mass="61432">MEKSQIYLELDGFQQHNFLYPLLFREYIYALAQDHGLNRSTISLENGGYDNKSSSLSGKRLITLLYQQIHLSISANDSNPNQFIGHNNNLYSQMISEGFAVIVEIPFSLQLVSFLEGKEMAKSHNFQSIHSIFPFFEDNFSHLNYVLDVLIPHPIRPEILVQTFRYWVKDASSLHLLRFFLHEYFNWNSLITPKKSISSFSTSNPRFFLFLYNFHVYEYEFLFFFLRNQSSHLRLTSSGVLLERIHFYGKVDYLVEVFANGFQDILRLYKDLFMHYVRYQGKAILASKDTPLLMNKWKNYFVNLWQWHFHVWSQPGRVHINHLHKDSINFLGYLSSRRQNPLVVRSQMLENAFLIDNAMKKFETAVPIIPMIESLTKARFCNPLGNPISKPTWADSSDCHIIGRFVRICRNLSHYHSGSSKKKSLYRIKYILRVSCVKSLVRKHKSTVRVFLKRLGSEFFQXFLTEEEXVLSLIFSRASFTWRXLYXGRVXYXDIICINDLVNHDKLXXXXXXXXXXXXXXX</sequence>
<comment type="function">
    <text evidence="1">Usually encoded in the trnK tRNA gene intron. Probably assists in splicing its own and other chloroplast group II introns.</text>
</comment>
<comment type="subcellular location">
    <subcellularLocation>
        <location>Plastid</location>
        <location>Chloroplast</location>
    </subcellularLocation>
</comment>
<comment type="similarity">
    <text evidence="1">Belongs to the intron maturase 2 family. MatK subfamily.</text>
</comment>
<dbReference type="EMBL" id="AY724324">
    <property type="protein sequence ID" value="AAU21376.1"/>
    <property type="molecule type" value="Genomic_DNA"/>
</dbReference>
<dbReference type="GO" id="GO:0009507">
    <property type="term" value="C:chloroplast"/>
    <property type="evidence" value="ECO:0007669"/>
    <property type="project" value="UniProtKB-SubCell"/>
</dbReference>
<dbReference type="GO" id="GO:0003723">
    <property type="term" value="F:RNA binding"/>
    <property type="evidence" value="ECO:0007669"/>
    <property type="project" value="UniProtKB-KW"/>
</dbReference>
<dbReference type="GO" id="GO:0006397">
    <property type="term" value="P:mRNA processing"/>
    <property type="evidence" value="ECO:0007669"/>
    <property type="project" value="UniProtKB-KW"/>
</dbReference>
<dbReference type="GO" id="GO:0008380">
    <property type="term" value="P:RNA splicing"/>
    <property type="evidence" value="ECO:0007669"/>
    <property type="project" value="UniProtKB-UniRule"/>
</dbReference>
<dbReference type="GO" id="GO:0008033">
    <property type="term" value="P:tRNA processing"/>
    <property type="evidence" value="ECO:0007669"/>
    <property type="project" value="UniProtKB-KW"/>
</dbReference>
<dbReference type="HAMAP" id="MF_01390">
    <property type="entry name" value="MatK"/>
    <property type="match status" value="1"/>
</dbReference>
<dbReference type="InterPro" id="IPR024937">
    <property type="entry name" value="Domain_X"/>
</dbReference>
<dbReference type="InterPro" id="IPR002866">
    <property type="entry name" value="Maturase_MatK"/>
</dbReference>
<dbReference type="InterPro" id="IPR024942">
    <property type="entry name" value="Maturase_MatK_N"/>
</dbReference>
<dbReference type="PANTHER" id="PTHR34811">
    <property type="entry name" value="MATURASE K"/>
    <property type="match status" value="1"/>
</dbReference>
<dbReference type="PANTHER" id="PTHR34811:SF1">
    <property type="entry name" value="MATURASE K"/>
    <property type="match status" value="1"/>
</dbReference>
<dbReference type="Pfam" id="PF01348">
    <property type="entry name" value="Intron_maturas2"/>
    <property type="match status" value="1"/>
</dbReference>
<dbReference type="Pfam" id="PF01824">
    <property type="entry name" value="MatK_N"/>
    <property type="match status" value="1"/>
</dbReference>